<organism>
    <name type="scientific">Porphyra purpurea</name>
    <name type="common">Red seaweed</name>
    <name type="synonym">Ulva purpurea</name>
    <dbReference type="NCBI Taxonomy" id="2787"/>
    <lineage>
        <taxon>Eukaryota</taxon>
        <taxon>Rhodophyta</taxon>
        <taxon>Bangiophyceae</taxon>
        <taxon>Bangiales</taxon>
        <taxon>Bangiaceae</taxon>
        <taxon>Porphyra</taxon>
    </lineage>
</organism>
<comment type="function">
    <text evidence="1">Binds 23S rRNA.</text>
</comment>
<comment type="subunit">
    <text evidence="1">Part of the 50S ribosomal subunit.</text>
</comment>
<comment type="subcellular location">
    <subcellularLocation>
        <location>Plastid</location>
        <location>Chloroplast</location>
    </subcellularLocation>
</comment>
<comment type="similarity">
    <text evidence="2">Belongs to the universal ribosomal protein uL6 family.</text>
</comment>
<keyword id="KW-0150">Chloroplast</keyword>
<keyword id="KW-0934">Plastid</keyword>
<keyword id="KW-0687">Ribonucleoprotein</keyword>
<keyword id="KW-0689">Ribosomal protein</keyword>
<keyword id="KW-0694">RNA-binding</keyword>
<keyword id="KW-0699">rRNA-binding</keyword>
<proteinExistence type="inferred from homology"/>
<name>RK6_PORPU</name>
<feature type="chain" id="PRO_0000131080" description="Large ribosomal subunit protein uL6c">
    <location>
        <begin position="1"/>
        <end position="180"/>
    </location>
</feature>
<geneLocation type="chloroplast"/>
<evidence type="ECO:0000250" key="1"/>
<evidence type="ECO:0000305" key="2"/>
<accession>P51300</accession>
<dbReference type="EMBL" id="U38804">
    <property type="protein sequence ID" value="AAC08186.1"/>
    <property type="molecule type" value="Genomic_DNA"/>
</dbReference>
<dbReference type="PIR" id="S73221">
    <property type="entry name" value="S73221"/>
</dbReference>
<dbReference type="RefSeq" id="NP_053910.1">
    <property type="nucleotide sequence ID" value="NC_000925.1"/>
</dbReference>
<dbReference type="SMR" id="P51300"/>
<dbReference type="GeneID" id="809929"/>
<dbReference type="GO" id="GO:0009507">
    <property type="term" value="C:chloroplast"/>
    <property type="evidence" value="ECO:0007669"/>
    <property type="project" value="UniProtKB-SubCell"/>
</dbReference>
<dbReference type="GO" id="GO:0022625">
    <property type="term" value="C:cytosolic large ribosomal subunit"/>
    <property type="evidence" value="ECO:0007669"/>
    <property type="project" value="TreeGrafter"/>
</dbReference>
<dbReference type="GO" id="GO:0019843">
    <property type="term" value="F:rRNA binding"/>
    <property type="evidence" value="ECO:0007669"/>
    <property type="project" value="UniProtKB-UniRule"/>
</dbReference>
<dbReference type="GO" id="GO:0003735">
    <property type="term" value="F:structural constituent of ribosome"/>
    <property type="evidence" value="ECO:0007669"/>
    <property type="project" value="InterPro"/>
</dbReference>
<dbReference type="GO" id="GO:0002181">
    <property type="term" value="P:cytoplasmic translation"/>
    <property type="evidence" value="ECO:0007669"/>
    <property type="project" value="TreeGrafter"/>
</dbReference>
<dbReference type="FunFam" id="3.90.930.12:FF:000001">
    <property type="entry name" value="50S ribosomal protein L6"/>
    <property type="match status" value="1"/>
</dbReference>
<dbReference type="FunFam" id="3.90.930.12:FF:000002">
    <property type="entry name" value="50S ribosomal protein L6"/>
    <property type="match status" value="1"/>
</dbReference>
<dbReference type="Gene3D" id="3.90.930.12">
    <property type="entry name" value="Ribosomal protein L6, alpha-beta domain"/>
    <property type="match status" value="2"/>
</dbReference>
<dbReference type="HAMAP" id="MF_01365_B">
    <property type="entry name" value="Ribosomal_uL6_B"/>
    <property type="match status" value="1"/>
</dbReference>
<dbReference type="InterPro" id="IPR000702">
    <property type="entry name" value="Ribosomal_uL6-like"/>
</dbReference>
<dbReference type="InterPro" id="IPR036789">
    <property type="entry name" value="Ribosomal_uL6-like_a/b-dom_sf"/>
</dbReference>
<dbReference type="InterPro" id="IPR020040">
    <property type="entry name" value="Ribosomal_uL6_a/b-dom"/>
</dbReference>
<dbReference type="InterPro" id="IPR019906">
    <property type="entry name" value="Ribosomal_uL6_bac-type"/>
</dbReference>
<dbReference type="InterPro" id="IPR002358">
    <property type="entry name" value="Ribosomal_uL6_CS"/>
</dbReference>
<dbReference type="NCBIfam" id="TIGR03654">
    <property type="entry name" value="L6_bact"/>
    <property type="match status" value="1"/>
</dbReference>
<dbReference type="PANTHER" id="PTHR11655">
    <property type="entry name" value="60S/50S RIBOSOMAL PROTEIN L6/L9"/>
    <property type="match status" value="1"/>
</dbReference>
<dbReference type="PANTHER" id="PTHR11655:SF14">
    <property type="entry name" value="LARGE RIBOSOMAL SUBUNIT PROTEIN UL6M"/>
    <property type="match status" value="1"/>
</dbReference>
<dbReference type="Pfam" id="PF00347">
    <property type="entry name" value="Ribosomal_L6"/>
    <property type="match status" value="2"/>
</dbReference>
<dbReference type="PIRSF" id="PIRSF002162">
    <property type="entry name" value="Ribosomal_L6"/>
    <property type="match status" value="1"/>
</dbReference>
<dbReference type="PRINTS" id="PR00059">
    <property type="entry name" value="RIBOSOMALL6"/>
</dbReference>
<dbReference type="SUPFAM" id="SSF56053">
    <property type="entry name" value="Ribosomal protein L6"/>
    <property type="match status" value="2"/>
</dbReference>
<dbReference type="PROSITE" id="PS00525">
    <property type="entry name" value="RIBOSOMAL_L6_1"/>
    <property type="match status" value="1"/>
</dbReference>
<reference key="1">
    <citation type="journal article" date="1995" name="Plant Mol. Biol. Rep.">
        <title>Complete nucleotide sequence of the Porphyra purpurea chloroplast genome.</title>
        <authorList>
            <person name="Reith M.E."/>
            <person name="Munholland J."/>
        </authorList>
    </citation>
    <scope>NUCLEOTIDE SEQUENCE [LARGE SCALE GENOMIC DNA]</scope>
    <source>
        <strain>Avonport</strain>
    </source>
</reference>
<gene>
    <name type="primary">rpl6</name>
</gene>
<sequence length="180" mass="19390">MSRIGKKIVLLPTNISTQFDGQTITVNGPKGTLLRTLPEGITLEINDGTILVQTSGNSKRANQLHGLSRTLISNMIEGVSTGFSKKLQIQGVGYRSQIDNNNLILSVGYSHVVTIQPPQNIEIKVENNTSITVLGIDKEVVGQVASSIRSIRPPEPYKGKGIRYQGEVVRTKAGKAGKGK</sequence>
<protein>
    <recommendedName>
        <fullName evidence="2">Large ribosomal subunit protein uL6c</fullName>
    </recommendedName>
    <alternativeName>
        <fullName>50S ribosomal protein L6, chloroplastic</fullName>
    </alternativeName>
</protein>